<evidence type="ECO:0000255" key="1">
    <source>
        <dbReference type="HAMAP-Rule" id="MF_01302"/>
    </source>
</evidence>
<evidence type="ECO:0000305" key="2"/>
<dbReference type="EMBL" id="CR555306">
    <property type="protein sequence ID" value="CAI08296.1"/>
    <property type="molecule type" value="Genomic_DNA"/>
</dbReference>
<dbReference type="RefSeq" id="WP_011237986.1">
    <property type="nucleotide sequence ID" value="NC_006513.1"/>
</dbReference>
<dbReference type="SMR" id="Q5P318"/>
<dbReference type="STRING" id="76114.ebB129"/>
<dbReference type="KEGG" id="eba:ebB129"/>
<dbReference type="eggNOG" id="COG0096">
    <property type="taxonomic scope" value="Bacteria"/>
</dbReference>
<dbReference type="HOGENOM" id="CLU_098428_0_0_4"/>
<dbReference type="OrthoDB" id="9802617at2"/>
<dbReference type="Proteomes" id="UP000006552">
    <property type="component" value="Chromosome"/>
</dbReference>
<dbReference type="GO" id="GO:1990904">
    <property type="term" value="C:ribonucleoprotein complex"/>
    <property type="evidence" value="ECO:0007669"/>
    <property type="project" value="UniProtKB-KW"/>
</dbReference>
<dbReference type="GO" id="GO:0005840">
    <property type="term" value="C:ribosome"/>
    <property type="evidence" value="ECO:0007669"/>
    <property type="project" value="UniProtKB-KW"/>
</dbReference>
<dbReference type="GO" id="GO:0019843">
    <property type="term" value="F:rRNA binding"/>
    <property type="evidence" value="ECO:0007669"/>
    <property type="project" value="UniProtKB-UniRule"/>
</dbReference>
<dbReference type="GO" id="GO:0003735">
    <property type="term" value="F:structural constituent of ribosome"/>
    <property type="evidence" value="ECO:0007669"/>
    <property type="project" value="InterPro"/>
</dbReference>
<dbReference type="GO" id="GO:0006412">
    <property type="term" value="P:translation"/>
    <property type="evidence" value="ECO:0007669"/>
    <property type="project" value="UniProtKB-UniRule"/>
</dbReference>
<dbReference type="FunFam" id="3.30.1370.30:FF:000002">
    <property type="entry name" value="30S ribosomal protein S8"/>
    <property type="match status" value="1"/>
</dbReference>
<dbReference type="FunFam" id="3.30.1490.10:FF:000001">
    <property type="entry name" value="30S ribosomal protein S8"/>
    <property type="match status" value="1"/>
</dbReference>
<dbReference type="Gene3D" id="3.30.1370.30">
    <property type="match status" value="1"/>
</dbReference>
<dbReference type="Gene3D" id="3.30.1490.10">
    <property type="match status" value="1"/>
</dbReference>
<dbReference type="HAMAP" id="MF_01302_B">
    <property type="entry name" value="Ribosomal_uS8_B"/>
    <property type="match status" value="1"/>
</dbReference>
<dbReference type="InterPro" id="IPR000630">
    <property type="entry name" value="Ribosomal_uS8"/>
</dbReference>
<dbReference type="InterPro" id="IPR047863">
    <property type="entry name" value="Ribosomal_uS8_CS"/>
</dbReference>
<dbReference type="InterPro" id="IPR035987">
    <property type="entry name" value="Ribosomal_uS8_sf"/>
</dbReference>
<dbReference type="NCBIfam" id="NF001109">
    <property type="entry name" value="PRK00136.1"/>
    <property type="match status" value="1"/>
</dbReference>
<dbReference type="PANTHER" id="PTHR11758">
    <property type="entry name" value="40S RIBOSOMAL PROTEIN S15A"/>
    <property type="match status" value="1"/>
</dbReference>
<dbReference type="Pfam" id="PF00410">
    <property type="entry name" value="Ribosomal_S8"/>
    <property type="match status" value="1"/>
</dbReference>
<dbReference type="SUPFAM" id="SSF56047">
    <property type="entry name" value="Ribosomal protein S8"/>
    <property type="match status" value="1"/>
</dbReference>
<dbReference type="PROSITE" id="PS00053">
    <property type="entry name" value="RIBOSOMAL_S8"/>
    <property type="match status" value="1"/>
</dbReference>
<feature type="chain" id="PRO_0000126356" description="Small ribosomal subunit protein uS8">
    <location>
        <begin position="1"/>
        <end position="131"/>
    </location>
</feature>
<proteinExistence type="inferred from homology"/>
<reference key="1">
    <citation type="journal article" date="2005" name="Arch. Microbiol.">
        <title>The genome sequence of an anaerobic aromatic-degrading denitrifying bacterium, strain EbN1.</title>
        <authorList>
            <person name="Rabus R."/>
            <person name="Kube M."/>
            <person name="Heider J."/>
            <person name="Beck A."/>
            <person name="Heitmann K."/>
            <person name="Widdel F."/>
            <person name="Reinhardt R."/>
        </authorList>
    </citation>
    <scope>NUCLEOTIDE SEQUENCE [LARGE SCALE GENOMIC DNA]</scope>
    <source>
        <strain>DSM 19018 / LMG 30748 / EbN1</strain>
    </source>
</reference>
<gene>
    <name evidence="1" type="primary">rpsH</name>
    <name type="ordered locus">AZOSEA21710</name>
    <name type="ORF">ebB129</name>
</gene>
<sequence length="131" mass="14125">MSMSDPIADMLTRIRNGQQAQKVSVSMPCSKLKVAIAKVLQDEGYIDGYSIREAGGKPELDVALKYYAGRPVIERIERVSRPGLRVYKGSGDLPRVMNGLGVAIVSTPRGVMTDRAARAGRVGGEVICYVA</sequence>
<organism>
    <name type="scientific">Aromatoleum aromaticum (strain DSM 19018 / LMG 30748 / EbN1)</name>
    <name type="common">Azoarcus sp. (strain EbN1)</name>
    <dbReference type="NCBI Taxonomy" id="76114"/>
    <lineage>
        <taxon>Bacteria</taxon>
        <taxon>Pseudomonadati</taxon>
        <taxon>Pseudomonadota</taxon>
        <taxon>Betaproteobacteria</taxon>
        <taxon>Rhodocyclales</taxon>
        <taxon>Rhodocyclaceae</taxon>
        <taxon>Aromatoleum</taxon>
    </lineage>
</organism>
<keyword id="KW-1185">Reference proteome</keyword>
<keyword id="KW-0687">Ribonucleoprotein</keyword>
<keyword id="KW-0689">Ribosomal protein</keyword>
<keyword id="KW-0694">RNA-binding</keyword>
<keyword id="KW-0699">rRNA-binding</keyword>
<comment type="function">
    <text evidence="1">One of the primary rRNA binding proteins, it binds directly to 16S rRNA central domain where it helps coordinate assembly of the platform of the 30S subunit.</text>
</comment>
<comment type="subunit">
    <text evidence="1">Part of the 30S ribosomal subunit. Contacts proteins S5 and S12.</text>
</comment>
<comment type="similarity">
    <text evidence="1">Belongs to the universal ribosomal protein uS8 family.</text>
</comment>
<protein>
    <recommendedName>
        <fullName evidence="1">Small ribosomal subunit protein uS8</fullName>
    </recommendedName>
    <alternativeName>
        <fullName evidence="2">30S ribosomal protein S8</fullName>
    </alternativeName>
</protein>
<name>RS8_AROAE</name>
<accession>Q5P318</accession>